<reference key="1">
    <citation type="journal article" date="1994" name="Mol. Cell. Biol.">
        <title>CDC44: a putative nucleotide-binding protein required for cell cycle progression that has homology to subunits of replication factor C.</title>
        <authorList>
            <person name="Howell E.A."/>
            <person name="McAlear M.A."/>
            <person name="Rose D."/>
            <person name="Holm C."/>
        </authorList>
    </citation>
    <scope>NUCLEOTIDE SEQUENCE</scope>
    <scope>MUTAGENESIS OF ASP-427; GLY-436; GLY-512 AND ASP-513</scope>
    <source>
        <strain>ATCC 204508 / S288c</strain>
    </source>
</reference>
<reference key="2">
    <citation type="journal article" date="1995" name="Mol. Cell. Biol.">
        <title>Characterization of the five replication factor C genes of Saccharomyces cerevisiae.</title>
        <authorList>
            <person name="Cullmann G."/>
            <person name="Fien K."/>
            <person name="Kobayashi R."/>
            <person name="Stillman B."/>
        </authorList>
    </citation>
    <scope>NUCLEOTIDE SEQUENCE [GENOMIC DNA]</scope>
    <scope>IDENTIFICATION IN THE RFC COMPLEX</scope>
    <source>
        <strain>ATCC 204508 / S288c</strain>
    </source>
</reference>
<reference key="3">
    <citation type="journal article" date="1996" name="Yeast">
        <title>Sequence and analysis of a 33 kb fragment from the right arm of chromosome XV of the yeast Saccharomyces cerevisiae.</title>
        <authorList>
            <person name="Galisson F."/>
            <person name="Dujon B."/>
        </authorList>
    </citation>
    <scope>NUCLEOTIDE SEQUENCE [GENOMIC DNA]</scope>
    <source>
        <strain>ATCC 96604 / S288c / FY1679</strain>
    </source>
</reference>
<reference key="4">
    <citation type="journal article" date="1997" name="Nature">
        <title>The nucleotide sequence of Saccharomyces cerevisiae chromosome XV.</title>
        <authorList>
            <person name="Dujon B."/>
            <person name="Albermann K."/>
            <person name="Aldea M."/>
            <person name="Alexandraki D."/>
            <person name="Ansorge W."/>
            <person name="Arino J."/>
            <person name="Benes V."/>
            <person name="Bohn C."/>
            <person name="Bolotin-Fukuhara M."/>
            <person name="Bordonne R."/>
            <person name="Boyer J."/>
            <person name="Camasses A."/>
            <person name="Casamayor A."/>
            <person name="Casas C."/>
            <person name="Cheret G."/>
            <person name="Cziepluch C."/>
            <person name="Daignan-Fornier B."/>
            <person name="Dang V.-D."/>
            <person name="de Haan M."/>
            <person name="Delius H."/>
            <person name="Durand P."/>
            <person name="Fairhead C."/>
            <person name="Feldmann H."/>
            <person name="Gaillon L."/>
            <person name="Galisson F."/>
            <person name="Gamo F.-J."/>
            <person name="Gancedo C."/>
            <person name="Goffeau A."/>
            <person name="Goulding S.E."/>
            <person name="Grivell L.A."/>
            <person name="Habbig B."/>
            <person name="Hand N.J."/>
            <person name="Hani J."/>
            <person name="Hattenhorst U."/>
            <person name="Hebling U."/>
            <person name="Hernando Y."/>
            <person name="Herrero E."/>
            <person name="Heumann K."/>
            <person name="Hiesel R."/>
            <person name="Hilger F."/>
            <person name="Hofmann B."/>
            <person name="Hollenberg C.P."/>
            <person name="Hughes B."/>
            <person name="Jauniaux J.-C."/>
            <person name="Kalogeropoulos A."/>
            <person name="Katsoulou C."/>
            <person name="Kordes E."/>
            <person name="Lafuente M.J."/>
            <person name="Landt O."/>
            <person name="Louis E.J."/>
            <person name="Maarse A.C."/>
            <person name="Madania A."/>
            <person name="Mannhaupt G."/>
            <person name="Marck C."/>
            <person name="Martin R.P."/>
            <person name="Mewes H.-W."/>
            <person name="Michaux G."/>
            <person name="Paces V."/>
            <person name="Parle-McDermott A.G."/>
            <person name="Pearson B.M."/>
            <person name="Perrin A."/>
            <person name="Pettersson B."/>
            <person name="Poch O."/>
            <person name="Pohl T.M."/>
            <person name="Poirey R."/>
            <person name="Portetelle D."/>
            <person name="Pujol A."/>
            <person name="Purnelle B."/>
            <person name="Ramezani Rad M."/>
            <person name="Rechmann S."/>
            <person name="Schwager C."/>
            <person name="Schweizer M."/>
            <person name="Sor F."/>
            <person name="Sterky F."/>
            <person name="Tarassov I.A."/>
            <person name="Teodoru C."/>
            <person name="Tettelin H."/>
            <person name="Thierry A."/>
            <person name="Tobiasch E."/>
            <person name="Tzermia M."/>
            <person name="Uhlen M."/>
            <person name="Unseld M."/>
            <person name="Valens M."/>
            <person name="Vandenbol M."/>
            <person name="Vetter I."/>
            <person name="Vlcek C."/>
            <person name="Voet M."/>
            <person name="Volckaert G."/>
            <person name="Voss H."/>
            <person name="Wambutt R."/>
            <person name="Wedler H."/>
            <person name="Wiemann S."/>
            <person name="Winsor B."/>
            <person name="Wolfe K.H."/>
            <person name="Zollner A."/>
            <person name="Zumstein E."/>
            <person name="Kleine K."/>
        </authorList>
    </citation>
    <scope>NUCLEOTIDE SEQUENCE [LARGE SCALE GENOMIC DNA]</scope>
    <source>
        <strain>ATCC 204508 / S288c</strain>
    </source>
</reference>
<reference key="5">
    <citation type="journal article" date="2014" name="G3 (Bethesda)">
        <title>The reference genome sequence of Saccharomyces cerevisiae: Then and now.</title>
        <authorList>
            <person name="Engel S.R."/>
            <person name="Dietrich F.S."/>
            <person name="Fisk D.G."/>
            <person name="Binkley G."/>
            <person name="Balakrishnan R."/>
            <person name="Costanzo M.C."/>
            <person name="Dwight S.S."/>
            <person name="Hitz B.C."/>
            <person name="Karra K."/>
            <person name="Nash R.S."/>
            <person name="Weng S."/>
            <person name="Wong E.D."/>
            <person name="Lloyd P."/>
            <person name="Skrzypek M.S."/>
            <person name="Miyasato S.R."/>
            <person name="Simison M."/>
            <person name="Cherry J.M."/>
        </authorList>
    </citation>
    <scope>GENOME REANNOTATION</scope>
    <source>
        <strain>ATCC 204508 / S288c</strain>
    </source>
</reference>
<reference key="6">
    <citation type="journal article" date="2003" name="J. Biol. Chem.">
        <title>Replication factor C clamp loader subunit arrangement within the circular pentamer and its attachment points to proliferating cell nuclear antigen.</title>
        <authorList>
            <person name="Yao N."/>
            <person name="Coryell L."/>
            <person name="Zhang D."/>
            <person name="Georgescu R.E."/>
            <person name="Finkelstein J."/>
            <person name="Coman M.M."/>
            <person name="Hingorani M.M."/>
            <person name="O'Donnell M."/>
        </authorList>
    </citation>
    <scope>INTERACTION WITH POL30</scope>
</reference>
<reference key="7">
    <citation type="journal article" date="2003" name="Mol. Cell. Biol.">
        <title>Mechanical link between cohesion establishment and DNA replication: Ctf7p/Eco1p, a cohesion establishment factor, associates with three different replication factor C complexes.</title>
        <authorList>
            <person name="Kenna M.A."/>
            <person name="Skibbens R.V."/>
        </authorList>
    </citation>
    <scope>INTERACTION WITH ECO1</scope>
</reference>
<reference key="8">
    <citation type="journal article" date="2003" name="Nature">
        <title>Global analysis of protein expression in yeast.</title>
        <authorList>
            <person name="Ghaemmaghami S."/>
            <person name="Huh W.-K."/>
            <person name="Bower K."/>
            <person name="Howson R.W."/>
            <person name="Belle A."/>
            <person name="Dephoure N."/>
            <person name="O'Shea E.K."/>
            <person name="Weissman J.S."/>
        </authorList>
    </citation>
    <scope>LEVEL OF PROTEIN EXPRESSION [LARGE SCALE ANALYSIS]</scope>
</reference>
<reference key="9">
    <citation type="journal article" date="2005" name="Mol. Cell. Biol.">
        <title>Replication protein A-directed unloading of PCNA by the Ctf18 cohesion establishment complex.</title>
        <authorList>
            <person name="Bylund G.O."/>
            <person name="Burgers P.M."/>
        </authorList>
    </citation>
    <scope>IDENTIFICATION IN THE RFC COMPLEX</scope>
</reference>
<reference key="10">
    <citation type="journal article" date="2007" name="J. Proteome Res.">
        <title>Large-scale phosphorylation analysis of alpha-factor-arrested Saccharomyces cerevisiae.</title>
        <authorList>
            <person name="Li X."/>
            <person name="Gerber S.A."/>
            <person name="Rudner A.D."/>
            <person name="Beausoleil S.A."/>
            <person name="Haas W."/>
            <person name="Villen J."/>
            <person name="Elias J.E."/>
            <person name="Gygi S.P."/>
        </authorList>
    </citation>
    <scope>PHOSPHORYLATION [LARGE SCALE ANALYSIS] AT THR-38 AND SER-40</scope>
    <scope>IDENTIFICATION BY MASS SPECTROMETRY [LARGE SCALE ANALYSIS]</scope>
    <source>
        <strain>ADR376</strain>
    </source>
</reference>
<reference key="11">
    <citation type="journal article" date="2008" name="Mol. Cell. Proteomics">
        <title>A multidimensional chromatography technology for in-depth phosphoproteome analysis.</title>
        <authorList>
            <person name="Albuquerque C.P."/>
            <person name="Smolka M.B."/>
            <person name="Payne S.H."/>
            <person name="Bafna V."/>
            <person name="Eng J."/>
            <person name="Zhou H."/>
        </authorList>
    </citation>
    <scope>PHOSPHORYLATION [LARGE SCALE ANALYSIS] AT THR-38 AND SER-40</scope>
    <scope>IDENTIFICATION BY MASS SPECTROMETRY [LARGE SCALE ANALYSIS]</scope>
</reference>
<reference key="12">
    <citation type="journal article" date="2009" name="Science">
        <title>Global analysis of Cdk1 substrate phosphorylation sites provides insights into evolution.</title>
        <authorList>
            <person name="Holt L.J."/>
            <person name="Tuch B.B."/>
            <person name="Villen J."/>
            <person name="Johnson A.D."/>
            <person name="Gygi S.P."/>
            <person name="Morgan D.O."/>
        </authorList>
    </citation>
    <scope>PHOSPHORYLATION [LARGE SCALE ANALYSIS] AT THR-38; SER-40 AND THR-63</scope>
    <scope>IDENTIFICATION BY MASS SPECTROMETRY [LARGE SCALE ANALYSIS]</scope>
</reference>
<reference key="13">
    <citation type="journal article" date="2012" name="Proc. Natl. Acad. Sci. U.S.A.">
        <title>N-terminal acetylome analyses and functional insights of the N-terminal acetyltransferase NatB.</title>
        <authorList>
            <person name="Van Damme P."/>
            <person name="Lasa M."/>
            <person name="Polevoda B."/>
            <person name="Gazquez C."/>
            <person name="Elosegui-Artola A."/>
            <person name="Kim D.S."/>
            <person name="De Juan-Pardo E."/>
            <person name="Demeyer K."/>
            <person name="Hole K."/>
            <person name="Larrea E."/>
            <person name="Timmerman E."/>
            <person name="Prieto J."/>
            <person name="Arnesen T."/>
            <person name="Sherman F."/>
            <person name="Gevaert K."/>
            <person name="Aldabe R."/>
        </authorList>
    </citation>
    <scope>IDENTIFICATION BY MASS SPECTROMETRY [LARGE SCALE ANALYSIS]</scope>
</reference>
<reference key="14">
    <citation type="journal article" date="2004" name="Nature">
        <title>Structural analysis of a eukaryotic sliding DNA clamp-clamp loader complex.</title>
        <authorList>
            <person name="Bowman G.D."/>
            <person name="O'Donnell M."/>
            <person name="Kuriyan J."/>
        </authorList>
    </citation>
    <scope>X-RAY CRYSTALLOGRAPHY (2.85 ANGSTROMS) OF 295-785 IN COMPLEX WITH AN ATP ANALOG; RCF2; RCF3; RCF4; RCF5 AND PCNA</scope>
</reference>
<sequence length="861" mass="94903">MVNISDFFGKNKKSVRSSTSRPTRQVGSSKPEVIDLDTESDQESTNKTPKKMPVSNVIDVSETPEGEKKLPLPAKRKASSPTVKPASSKKTKPSSKSSDSASNITAQDVLDKIPSLDLSNVHVKENAKFDFKSANSNADPDEIVSEIGSFPEGKPNCLLGLTIVFTGVLPTLERGASEALAKRYGARVTKSISSKTSVVVLGDEAGPKKLEKIKQLKIKAIDEEGFKQLIAGMPAEGGDGEAAEKARRKLEEQHNIATKEAELLVKKEEERSKKLAATRVSGGHLERDNVVREEDKLWTVKYAPTNLQQVCGNKGSVMKLKNWLANWENSKKNSFKHAGKDGSGVFRAAMLYGPPGIGKTTAAHLVAQELGYDILEQNASDVRSKTLLNAGVKNALDNMSVVGYFKHNEEAQNLNGKHFVIIMDEVDGMSGGDRGGVGQLAQFCRKTSTPLILICNERNLPKMRPFDRVCLDIQFRRPDANSIKSRLMTIAIREKFKLDPNVIDRLIQTTRGDIRQVINLLSTISTTTKTINHENINEISKAWEKNIALKPFDIAHKMLDGQIYSDIGSRNFTLNDKIALYFDDFDFTPLMIQENYLSTRPSVLKPGQSHLEAVAEAANCISLGDIVEKKIRSSEQLWSLLPLHAVLSSVYPASKVAGHMAGRINFTAWLGQNSKSAKYYRLLQEIHYHTRLGTSTDKIGLRLDYLPTFRKRLLDPFLKQGADAISSVIEVMDDYYLTKEDWDSIMEFFVGPDVTTAIIKKIPATVKSGFTRKYNSMTHPVAIYRTGSTIGGGGVGTSTSTPDFEDVVDADDNPVPADDEETQDSSTDLKKDKLIKQKAKPTKRKTATSKPGGSKKRKTKA</sequence>
<dbReference type="EMBL" id="U03102">
    <property type="protein sequence ID" value="AAC48916.1"/>
    <property type="molecule type" value="Unassigned_DNA"/>
</dbReference>
<dbReference type="EMBL" id="U26027">
    <property type="protein sequence ID" value="AAC49060.1"/>
    <property type="molecule type" value="Genomic_DNA"/>
</dbReference>
<dbReference type="EMBL" id="X92441">
    <property type="protein sequence ID" value="CAA63180.1"/>
    <property type="molecule type" value="Genomic_DNA"/>
</dbReference>
<dbReference type="EMBL" id="Z75125">
    <property type="protein sequence ID" value="CAA99434.1"/>
    <property type="molecule type" value="Genomic_DNA"/>
</dbReference>
<dbReference type="EMBL" id="BK006948">
    <property type="protein sequence ID" value="DAA10989.1"/>
    <property type="molecule type" value="Genomic_DNA"/>
</dbReference>
<dbReference type="PIR" id="S44763">
    <property type="entry name" value="S44763"/>
</dbReference>
<dbReference type="RefSeq" id="NP_014860.1">
    <property type="nucleotide sequence ID" value="NM_001183636.1"/>
</dbReference>
<dbReference type="PDB" id="1SXJ">
    <property type="method" value="X-ray"/>
    <property type="resolution" value="2.85 A"/>
    <property type="chains" value="A=295-785"/>
</dbReference>
<dbReference type="PDB" id="7TFH">
    <property type="method" value="EM"/>
    <property type="resolution" value="3.09 A"/>
    <property type="chains" value="A=1-861"/>
</dbReference>
<dbReference type="PDB" id="7TFI">
    <property type="method" value="EM"/>
    <property type="resolution" value="3.41 A"/>
    <property type="chains" value="A=1-861"/>
</dbReference>
<dbReference type="PDB" id="7TFJ">
    <property type="method" value="EM"/>
    <property type="resolution" value="3.30 A"/>
    <property type="chains" value="A=1-861"/>
</dbReference>
<dbReference type="PDB" id="7TFK">
    <property type="method" value="EM"/>
    <property type="resolution" value="3.25 A"/>
    <property type="chains" value="A=1-861"/>
</dbReference>
<dbReference type="PDB" id="7TFL">
    <property type="method" value="EM"/>
    <property type="resolution" value="3.33 A"/>
    <property type="chains" value="A=1-861"/>
</dbReference>
<dbReference type="PDB" id="7THJ">
    <property type="method" value="EM"/>
    <property type="resolution" value="3.80 A"/>
    <property type="chains" value="A=1-861"/>
</dbReference>
<dbReference type="PDB" id="7THV">
    <property type="method" value="EM"/>
    <property type="resolution" value="4.00 A"/>
    <property type="chains" value="A=1-861"/>
</dbReference>
<dbReference type="PDB" id="7TI8">
    <property type="method" value="EM"/>
    <property type="resolution" value="3.50 A"/>
    <property type="chains" value="A=1-861"/>
</dbReference>
<dbReference type="PDB" id="7TIB">
    <property type="method" value="EM"/>
    <property type="resolution" value="3.40 A"/>
    <property type="chains" value="A=1-861"/>
</dbReference>
<dbReference type="PDB" id="7TIC">
    <property type="method" value="EM"/>
    <property type="resolution" value="3.90 A"/>
    <property type="chains" value="A=1-861"/>
</dbReference>
<dbReference type="PDB" id="7TID">
    <property type="method" value="EM"/>
    <property type="resolution" value="3.30 A"/>
    <property type="chains" value="A=1-861"/>
</dbReference>
<dbReference type="PDB" id="7TKU">
    <property type="method" value="EM"/>
    <property type="resolution" value="4.00 A"/>
    <property type="chains" value="A=1-861"/>
</dbReference>
<dbReference type="PDB" id="7U19">
    <property type="method" value="EM"/>
    <property type="resolution" value="3.70 A"/>
    <property type="chains" value="A=1-861"/>
</dbReference>
<dbReference type="PDB" id="7U1A">
    <property type="method" value="EM"/>
    <property type="resolution" value="3.30 A"/>
    <property type="chains" value="A=1-861"/>
</dbReference>
<dbReference type="PDB" id="7U1P">
    <property type="method" value="EM"/>
    <property type="resolution" value="3.00 A"/>
    <property type="chains" value="A=1-861"/>
</dbReference>
<dbReference type="PDB" id="8DQX">
    <property type="method" value="EM"/>
    <property type="resolution" value="2.10 A"/>
    <property type="chains" value="A=1-861"/>
</dbReference>
<dbReference type="PDB" id="8DQZ">
    <property type="method" value="EM"/>
    <property type="resolution" value="2.92 A"/>
    <property type="chains" value="A=1-861"/>
</dbReference>
<dbReference type="PDB" id="8DR0">
    <property type="method" value="EM"/>
    <property type="resolution" value="2.42 A"/>
    <property type="chains" value="A=1-861"/>
</dbReference>
<dbReference type="PDB" id="8DR1">
    <property type="method" value="EM"/>
    <property type="resolution" value="2.14 A"/>
    <property type="chains" value="A=1-861"/>
</dbReference>
<dbReference type="PDB" id="8DR3">
    <property type="method" value="EM"/>
    <property type="resolution" value="2.20 A"/>
    <property type="chains" value="A=1-861"/>
</dbReference>
<dbReference type="PDB" id="8DR4">
    <property type="method" value="EM"/>
    <property type="resolution" value="2.45 A"/>
    <property type="chains" value="A=1-861"/>
</dbReference>
<dbReference type="PDB" id="8DR5">
    <property type="method" value="EM"/>
    <property type="resolution" value="2.76 A"/>
    <property type="chains" value="A=1-861"/>
</dbReference>
<dbReference type="PDB" id="8DR6">
    <property type="method" value="EM"/>
    <property type="resolution" value="2.39 A"/>
    <property type="chains" value="A=1-861"/>
</dbReference>
<dbReference type="PDB" id="8DR7">
    <property type="method" value="EM"/>
    <property type="resolution" value="2.70 A"/>
    <property type="chains" value="A=1-861"/>
</dbReference>
<dbReference type="PDBsum" id="1SXJ"/>
<dbReference type="PDBsum" id="7TFH"/>
<dbReference type="PDBsum" id="7TFI"/>
<dbReference type="PDBsum" id="7TFJ"/>
<dbReference type="PDBsum" id="7TFK"/>
<dbReference type="PDBsum" id="7TFL"/>
<dbReference type="PDBsum" id="7THJ"/>
<dbReference type="PDBsum" id="7THV"/>
<dbReference type="PDBsum" id="7TI8"/>
<dbReference type="PDBsum" id="7TIB"/>
<dbReference type="PDBsum" id="7TIC"/>
<dbReference type="PDBsum" id="7TID"/>
<dbReference type="PDBsum" id="7TKU"/>
<dbReference type="PDBsum" id="7U19"/>
<dbReference type="PDBsum" id="7U1A"/>
<dbReference type="PDBsum" id="7U1P"/>
<dbReference type="PDBsum" id="8DQX"/>
<dbReference type="PDBsum" id="8DQZ"/>
<dbReference type="PDBsum" id="8DR0"/>
<dbReference type="PDBsum" id="8DR1"/>
<dbReference type="PDBsum" id="8DR3"/>
<dbReference type="PDBsum" id="8DR4"/>
<dbReference type="PDBsum" id="8DR5"/>
<dbReference type="PDBsum" id="8DR6"/>
<dbReference type="PDBsum" id="8DR7"/>
<dbReference type="EMDB" id="EMD-25568"/>
<dbReference type="EMDB" id="EMD-25569"/>
<dbReference type="EMDB" id="EMD-25614"/>
<dbReference type="EMDB" id="EMD-25615"/>
<dbReference type="EMDB" id="EMD-25616"/>
<dbReference type="EMDB" id="EMD-25617"/>
<dbReference type="EMDB" id="EMD-25753"/>
<dbReference type="EMDB" id="EMD-25872"/>
<dbReference type="EMDB" id="EMD-25873"/>
<dbReference type="EMDB" id="EMD-25874"/>
<dbReference type="EMDB" id="EMD-25875"/>
<dbReference type="EMDB" id="EMD-25876"/>
<dbReference type="EMDB" id="EMD-26297"/>
<dbReference type="EMDB" id="EMD-26298"/>
<dbReference type="EMDB" id="EMD-26302"/>
<dbReference type="EMDB" id="EMD-27663"/>
<dbReference type="EMDB" id="EMD-27666"/>
<dbReference type="EMDB" id="EMD-27667"/>
<dbReference type="EMDB" id="EMD-27668"/>
<dbReference type="EMDB" id="EMD-27669"/>
<dbReference type="EMDB" id="EMD-27670"/>
<dbReference type="EMDB" id="EMD-27671"/>
<dbReference type="EMDB" id="EMD-27672"/>
<dbReference type="EMDB" id="EMD-27673"/>
<dbReference type="SMR" id="P38630"/>
<dbReference type="BioGRID" id="34612">
    <property type="interactions" value="339"/>
</dbReference>
<dbReference type="ComplexPortal" id="CPX-545">
    <property type="entry name" value="DNA replication factor C complex"/>
</dbReference>
<dbReference type="DIP" id="DIP-2527N"/>
<dbReference type="ELM" id="P38630"/>
<dbReference type="FunCoup" id="P38630">
    <property type="interactions" value="1202"/>
</dbReference>
<dbReference type="IntAct" id="P38630">
    <property type="interactions" value="40"/>
</dbReference>
<dbReference type="MINT" id="P38630"/>
<dbReference type="STRING" id="4932.YOR217W"/>
<dbReference type="iPTMnet" id="P38630"/>
<dbReference type="PaxDb" id="4932-YOR217W"/>
<dbReference type="PeptideAtlas" id="P38630"/>
<dbReference type="EnsemblFungi" id="YOR217W_mRNA">
    <property type="protein sequence ID" value="YOR217W"/>
    <property type="gene ID" value="YOR217W"/>
</dbReference>
<dbReference type="GeneID" id="854392"/>
<dbReference type="KEGG" id="sce:YOR217W"/>
<dbReference type="AGR" id="SGD:S000005743"/>
<dbReference type="SGD" id="S000005743">
    <property type="gene designation" value="RFC1"/>
</dbReference>
<dbReference type="VEuPathDB" id="FungiDB:YOR217W"/>
<dbReference type="eggNOG" id="KOG1968">
    <property type="taxonomic scope" value="Eukaryota"/>
</dbReference>
<dbReference type="HOGENOM" id="CLU_003574_1_0_1"/>
<dbReference type="InParanoid" id="P38630"/>
<dbReference type="OMA" id="LICNERN"/>
<dbReference type="OrthoDB" id="446168at2759"/>
<dbReference type="BioCyc" id="YEAST:G3O-33719-MONOMER"/>
<dbReference type="Reactome" id="R-SCE-110312">
    <property type="pathway name" value="Translesion synthesis by REV1"/>
</dbReference>
<dbReference type="Reactome" id="R-SCE-110320">
    <property type="pathway name" value="Translesion Synthesis by POLH"/>
</dbReference>
<dbReference type="Reactome" id="R-SCE-5655862">
    <property type="pathway name" value="Translesion synthesis by POLK"/>
</dbReference>
<dbReference type="Reactome" id="R-SCE-5656121">
    <property type="pathway name" value="Translesion synthesis by POLI"/>
</dbReference>
<dbReference type="Reactome" id="R-SCE-5656169">
    <property type="pathway name" value="Termination of translesion DNA synthesis"/>
</dbReference>
<dbReference type="Reactome" id="R-SCE-5696397">
    <property type="pathway name" value="Gap-filling DNA repair synthesis and ligation in GG-NER"/>
</dbReference>
<dbReference type="Reactome" id="R-SCE-6782135">
    <property type="pathway name" value="Dual incision in TC-NER"/>
</dbReference>
<dbReference type="Reactome" id="R-SCE-6782210">
    <property type="pathway name" value="Gap-filling DNA repair synthesis and ligation in TC-NER"/>
</dbReference>
<dbReference type="Reactome" id="R-SCE-69091">
    <property type="pathway name" value="Polymerase switching"/>
</dbReference>
<dbReference type="BioGRID-ORCS" id="854392">
    <property type="hits" value="3 hits in 10 CRISPR screens"/>
</dbReference>
<dbReference type="EvolutionaryTrace" id="P38630"/>
<dbReference type="PRO" id="PR:P38630"/>
<dbReference type="Proteomes" id="UP000002311">
    <property type="component" value="Chromosome XV"/>
</dbReference>
<dbReference type="RNAct" id="P38630">
    <property type="molecule type" value="protein"/>
</dbReference>
<dbReference type="GO" id="GO:0005663">
    <property type="term" value="C:DNA replication factor C complex"/>
    <property type="evidence" value="ECO:0000314"/>
    <property type="project" value="SGD"/>
</dbReference>
<dbReference type="GO" id="GO:0005634">
    <property type="term" value="C:nucleus"/>
    <property type="evidence" value="ECO:0000318"/>
    <property type="project" value="GO_Central"/>
</dbReference>
<dbReference type="GO" id="GO:0005524">
    <property type="term" value="F:ATP binding"/>
    <property type="evidence" value="ECO:0007669"/>
    <property type="project" value="UniProtKB-KW"/>
</dbReference>
<dbReference type="GO" id="GO:0016887">
    <property type="term" value="F:ATP hydrolysis activity"/>
    <property type="evidence" value="ECO:0007669"/>
    <property type="project" value="InterPro"/>
</dbReference>
<dbReference type="GO" id="GO:0003677">
    <property type="term" value="F:DNA binding"/>
    <property type="evidence" value="ECO:0000318"/>
    <property type="project" value="GO_Central"/>
</dbReference>
<dbReference type="GO" id="GO:0003689">
    <property type="term" value="F:DNA clamp loader activity"/>
    <property type="evidence" value="ECO:0007669"/>
    <property type="project" value="InterPro"/>
</dbReference>
<dbReference type="GO" id="GO:0051301">
    <property type="term" value="P:cell division"/>
    <property type="evidence" value="ECO:0007669"/>
    <property type="project" value="UniProtKB-KW"/>
</dbReference>
<dbReference type="GO" id="GO:0006281">
    <property type="term" value="P:DNA repair"/>
    <property type="evidence" value="ECO:0000315"/>
    <property type="project" value="SGD"/>
</dbReference>
<dbReference type="GO" id="GO:0006261">
    <property type="term" value="P:DNA-templated DNA replication"/>
    <property type="evidence" value="ECO:0000314"/>
    <property type="project" value="ComplexPortal"/>
</dbReference>
<dbReference type="GO" id="GO:0006272">
    <property type="term" value="P:leading strand elongation"/>
    <property type="evidence" value="ECO:0000314"/>
    <property type="project" value="SGD"/>
</dbReference>
<dbReference type="GO" id="GO:0006298">
    <property type="term" value="P:mismatch repair"/>
    <property type="evidence" value="ECO:0000316"/>
    <property type="project" value="SGD"/>
</dbReference>
<dbReference type="GO" id="GO:0000278">
    <property type="term" value="P:mitotic cell cycle"/>
    <property type="evidence" value="ECO:0000315"/>
    <property type="project" value="SGD"/>
</dbReference>
<dbReference type="CDD" id="cd00009">
    <property type="entry name" value="AAA"/>
    <property type="match status" value="1"/>
</dbReference>
<dbReference type="CDD" id="cd18140">
    <property type="entry name" value="HLD_clamp_RFC"/>
    <property type="match status" value="1"/>
</dbReference>
<dbReference type="FunFam" id="1.10.8.60:FF:000021">
    <property type="entry name" value="Replication factor C subunit 1"/>
    <property type="match status" value="1"/>
</dbReference>
<dbReference type="FunFam" id="1.20.272.10:FF:000005">
    <property type="entry name" value="Replication factor C subunit 1"/>
    <property type="match status" value="1"/>
</dbReference>
<dbReference type="FunFam" id="3.40.50.10190:FF:000001">
    <property type="entry name" value="Replication factor C subunit 1"/>
    <property type="match status" value="1"/>
</dbReference>
<dbReference type="FunFam" id="3.40.50.300:FF:000395">
    <property type="entry name" value="Replication factor C subunit 1"/>
    <property type="match status" value="1"/>
</dbReference>
<dbReference type="Gene3D" id="1.10.8.60">
    <property type="match status" value="1"/>
</dbReference>
<dbReference type="Gene3D" id="1.20.272.10">
    <property type="match status" value="1"/>
</dbReference>
<dbReference type="Gene3D" id="3.40.50.10190">
    <property type="entry name" value="BRCT domain"/>
    <property type="match status" value="1"/>
</dbReference>
<dbReference type="Gene3D" id="3.40.50.300">
    <property type="entry name" value="P-loop containing nucleotide triphosphate hydrolases"/>
    <property type="match status" value="1"/>
</dbReference>
<dbReference type="InterPro" id="IPR003593">
    <property type="entry name" value="AAA+_ATPase"/>
</dbReference>
<dbReference type="InterPro" id="IPR003959">
    <property type="entry name" value="ATPase_AAA_core"/>
</dbReference>
<dbReference type="InterPro" id="IPR001357">
    <property type="entry name" value="BRCT_dom"/>
</dbReference>
<dbReference type="InterPro" id="IPR036420">
    <property type="entry name" value="BRCT_dom_sf"/>
</dbReference>
<dbReference type="InterPro" id="IPR008921">
    <property type="entry name" value="DNA_pol3_clamp-load_cplx_C"/>
</dbReference>
<dbReference type="InterPro" id="IPR013725">
    <property type="entry name" value="DNA_replication_fac_RFC1_C"/>
</dbReference>
<dbReference type="InterPro" id="IPR027417">
    <property type="entry name" value="P-loop_NTPase"/>
</dbReference>
<dbReference type="InterPro" id="IPR012178">
    <property type="entry name" value="RFC1"/>
</dbReference>
<dbReference type="InterPro" id="IPR047854">
    <property type="entry name" value="RFC_lid"/>
</dbReference>
<dbReference type="PANTHER" id="PTHR23389">
    <property type="entry name" value="CHROMOSOME TRANSMISSION FIDELITY FACTOR 18"/>
    <property type="match status" value="1"/>
</dbReference>
<dbReference type="PANTHER" id="PTHR23389:SF6">
    <property type="entry name" value="REPLICATION FACTOR C SUBUNIT 1"/>
    <property type="match status" value="1"/>
</dbReference>
<dbReference type="Pfam" id="PF00004">
    <property type="entry name" value="AAA"/>
    <property type="match status" value="1"/>
</dbReference>
<dbReference type="Pfam" id="PF25361">
    <property type="entry name" value="AAA_lid_RFC1"/>
    <property type="match status" value="1"/>
</dbReference>
<dbReference type="Pfam" id="PF00533">
    <property type="entry name" value="BRCT"/>
    <property type="match status" value="1"/>
</dbReference>
<dbReference type="Pfam" id="PF08519">
    <property type="entry name" value="RFC1"/>
    <property type="match status" value="1"/>
</dbReference>
<dbReference type="PIRSF" id="PIRSF036578">
    <property type="entry name" value="RFC1"/>
    <property type="match status" value="1"/>
</dbReference>
<dbReference type="SMART" id="SM00382">
    <property type="entry name" value="AAA"/>
    <property type="match status" value="1"/>
</dbReference>
<dbReference type="SMART" id="SM00292">
    <property type="entry name" value="BRCT"/>
    <property type="match status" value="1"/>
</dbReference>
<dbReference type="SUPFAM" id="SSF52113">
    <property type="entry name" value="BRCT domain"/>
    <property type="match status" value="1"/>
</dbReference>
<dbReference type="SUPFAM" id="SSF52540">
    <property type="entry name" value="P-loop containing nucleoside triphosphate hydrolases"/>
    <property type="match status" value="1"/>
</dbReference>
<dbReference type="SUPFAM" id="SSF48019">
    <property type="entry name" value="post-AAA+ oligomerization domain-like"/>
    <property type="match status" value="1"/>
</dbReference>
<dbReference type="PROSITE" id="PS50172">
    <property type="entry name" value="BRCT"/>
    <property type="match status" value="1"/>
</dbReference>
<evidence type="ECO:0000255" key="1"/>
<evidence type="ECO:0000255" key="2">
    <source>
        <dbReference type="PROSITE-ProRule" id="PRU00033"/>
    </source>
</evidence>
<evidence type="ECO:0000256" key="3">
    <source>
        <dbReference type="SAM" id="MobiDB-lite"/>
    </source>
</evidence>
<evidence type="ECO:0000269" key="4">
    <source>
    </source>
</evidence>
<evidence type="ECO:0000269" key="5">
    <source>
    </source>
</evidence>
<evidence type="ECO:0000269" key="6">
    <source>
    </source>
</evidence>
<evidence type="ECO:0000269" key="7">
    <source>
    </source>
</evidence>
<evidence type="ECO:0000269" key="8">
    <source>
    </source>
</evidence>
<evidence type="ECO:0000269" key="9">
    <source>
    </source>
</evidence>
<evidence type="ECO:0000269" key="10">
    <source>
    </source>
</evidence>
<evidence type="ECO:0000305" key="11"/>
<evidence type="ECO:0007744" key="12">
    <source>
    </source>
</evidence>
<evidence type="ECO:0007744" key="13">
    <source>
    </source>
</evidence>
<evidence type="ECO:0007744" key="14">
    <source>
    </source>
</evidence>
<evidence type="ECO:0007829" key="15">
    <source>
        <dbReference type="PDB" id="1SXJ"/>
    </source>
</evidence>
<evidence type="ECO:0007829" key="16">
    <source>
        <dbReference type="PDB" id="7U1A"/>
    </source>
</evidence>
<evidence type="ECO:0007829" key="17">
    <source>
        <dbReference type="PDB" id="7U1P"/>
    </source>
</evidence>
<evidence type="ECO:0007829" key="18">
    <source>
        <dbReference type="PDB" id="8DQX"/>
    </source>
</evidence>
<evidence type="ECO:0007829" key="19">
    <source>
        <dbReference type="PDB" id="8DR1"/>
    </source>
</evidence>
<evidence type="ECO:0007829" key="20">
    <source>
        <dbReference type="PDB" id="8DR3"/>
    </source>
</evidence>
<evidence type="ECO:0007829" key="21">
    <source>
        <dbReference type="PDB" id="8DR5"/>
    </source>
</evidence>
<evidence type="ECO:0007829" key="22">
    <source>
        <dbReference type="PDB" id="8DR7"/>
    </source>
</evidence>
<name>RFC1_YEAST</name>
<gene>
    <name type="primary">RFC1</name>
    <name type="synonym">CDC44</name>
    <name type="ordered locus">YOR217W</name>
    <name type="ORF">YOR50-7</name>
</gene>
<feature type="chain" id="PRO_0000121776" description="Replication factor C subunit 1">
    <location>
        <begin position="1"/>
        <end position="861"/>
    </location>
</feature>
<feature type="domain" description="BRCT" evidence="2">
    <location>
        <begin position="153"/>
        <end position="243"/>
    </location>
</feature>
<feature type="region of interest" description="Disordered" evidence="3">
    <location>
        <begin position="1"/>
        <end position="103"/>
    </location>
</feature>
<feature type="region of interest" description="Disordered" evidence="3">
    <location>
        <begin position="788"/>
        <end position="861"/>
    </location>
</feature>
<feature type="short sequence motif" description="Nuclear localization signal" evidence="1">
    <location>
        <begin position="830"/>
        <end position="834"/>
    </location>
</feature>
<feature type="short sequence motif" description="Nuclear localization signal" evidence="1">
    <location>
        <begin position="855"/>
        <end position="860"/>
    </location>
</feature>
<feature type="compositionally biased region" description="Polar residues" evidence="3">
    <location>
        <begin position="16"/>
        <end position="28"/>
    </location>
</feature>
<feature type="compositionally biased region" description="Acidic residues" evidence="3">
    <location>
        <begin position="803"/>
        <end position="823"/>
    </location>
</feature>
<feature type="compositionally biased region" description="Basic residues" evidence="3">
    <location>
        <begin position="836"/>
        <end position="861"/>
    </location>
</feature>
<feature type="binding site">
    <location>
        <position position="299"/>
    </location>
    <ligand>
        <name>ATP</name>
        <dbReference type="ChEBI" id="CHEBI:30616"/>
    </ligand>
</feature>
<feature type="binding site">
    <location>
        <position position="311"/>
    </location>
    <ligand>
        <name>ATP</name>
        <dbReference type="ChEBI" id="CHEBI:30616"/>
    </ligand>
</feature>
<feature type="binding site">
    <location>
        <begin position="353"/>
        <end position="361"/>
    </location>
    <ligand>
        <name>ATP</name>
        <dbReference type="ChEBI" id="CHEBI:30616"/>
    </ligand>
</feature>
<feature type="binding site">
    <location>
        <position position="456"/>
    </location>
    <ligand>
        <name>ATP</name>
        <dbReference type="ChEBI" id="CHEBI:30616"/>
    </ligand>
</feature>
<feature type="modified residue" description="Phosphothreonine" evidence="12 13 14">
    <location>
        <position position="38"/>
    </location>
</feature>
<feature type="modified residue" description="Phosphoserine" evidence="12 13 14">
    <location>
        <position position="40"/>
    </location>
</feature>
<feature type="modified residue" description="Phosphothreonine" evidence="14">
    <location>
        <position position="63"/>
    </location>
</feature>
<feature type="mutagenesis site" description="In cs mutant CDC44-2; causes cell cycle arrest." evidence="10">
    <original>D</original>
    <variation>H</variation>
    <location>
        <position position="427"/>
    </location>
</feature>
<feature type="mutagenesis site" description="In cs mutant CDC44-3/4; causes cell cycle arrest." evidence="10">
    <original>G</original>
    <variation>R</variation>
    <location>
        <position position="436"/>
    </location>
</feature>
<feature type="mutagenesis site" description="In cs mutant CDC44-9; no effect." evidence="10">
    <original>G</original>
    <variation>A</variation>
    <location>
        <position position="512"/>
    </location>
</feature>
<feature type="mutagenesis site" description="In cs mutants CDC44-1/5/8 and CDC44-9; causes cell cycle arrest." evidence="10">
    <original>D</original>
    <variation>N</variation>
    <location>
        <position position="513"/>
    </location>
</feature>
<feature type="helix" evidence="20">
    <location>
        <begin position="106"/>
        <end position="112"/>
    </location>
</feature>
<feature type="turn" evidence="20">
    <location>
        <begin position="155"/>
        <end position="160"/>
    </location>
</feature>
<feature type="strand" evidence="20">
    <location>
        <begin position="162"/>
        <end position="168"/>
    </location>
</feature>
<feature type="strand" evidence="20">
    <location>
        <begin position="170"/>
        <end position="172"/>
    </location>
</feature>
<feature type="helix" evidence="20">
    <location>
        <begin position="174"/>
        <end position="183"/>
    </location>
</feature>
<feature type="strand" evidence="20">
    <location>
        <begin position="198"/>
        <end position="201"/>
    </location>
</feature>
<feature type="helix" evidence="20">
    <location>
        <begin position="207"/>
        <end position="216"/>
    </location>
</feature>
<feature type="strand" evidence="21">
    <location>
        <begin position="219"/>
        <end position="221"/>
    </location>
</feature>
<feature type="helix" evidence="20">
    <location>
        <begin position="223"/>
        <end position="231"/>
    </location>
</feature>
<feature type="strand" evidence="20">
    <location>
        <begin position="236"/>
        <end position="240"/>
    </location>
</feature>
<feature type="helix" evidence="20">
    <location>
        <begin position="241"/>
        <end position="280"/>
    </location>
</feature>
<feature type="helix" evidence="18">
    <location>
        <begin position="293"/>
        <end position="295"/>
    </location>
</feature>
<feature type="helix" evidence="18">
    <location>
        <begin position="298"/>
        <end position="301"/>
    </location>
</feature>
<feature type="helix" evidence="18">
    <location>
        <begin position="307"/>
        <end position="309"/>
    </location>
</feature>
<feature type="helix" evidence="18">
    <location>
        <begin position="314"/>
        <end position="325"/>
    </location>
</feature>
<feature type="helix" evidence="18">
    <location>
        <begin position="327"/>
        <end position="332"/>
    </location>
</feature>
<feature type="turn" evidence="18">
    <location>
        <begin position="333"/>
        <end position="335"/>
    </location>
</feature>
<feature type="strand" evidence="18">
    <location>
        <begin position="340"/>
        <end position="342"/>
    </location>
</feature>
<feature type="helix" evidence="19">
    <location>
        <begin position="343"/>
        <end position="345"/>
    </location>
</feature>
<feature type="strand" evidence="18">
    <location>
        <begin position="347"/>
        <end position="352"/>
    </location>
</feature>
<feature type="strand" evidence="19">
    <location>
        <begin position="354"/>
        <end position="358"/>
    </location>
</feature>
<feature type="helix" evidence="18">
    <location>
        <begin position="359"/>
        <end position="369"/>
    </location>
</feature>
<feature type="strand" evidence="18">
    <location>
        <begin position="373"/>
        <end position="377"/>
    </location>
</feature>
<feature type="turn" evidence="17">
    <location>
        <begin position="379"/>
        <end position="381"/>
    </location>
</feature>
<feature type="helix" evidence="18">
    <location>
        <begin position="385"/>
        <end position="390"/>
    </location>
</feature>
<feature type="helix" evidence="18">
    <location>
        <begin position="392"/>
        <end position="395"/>
    </location>
</feature>
<feature type="strand" evidence="16">
    <location>
        <begin position="396"/>
        <end position="398"/>
    </location>
</feature>
<feature type="helix" evidence="18">
    <location>
        <begin position="401"/>
        <end position="406"/>
    </location>
</feature>
<feature type="strand" evidence="18">
    <location>
        <begin position="407"/>
        <end position="412"/>
    </location>
</feature>
<feature type="turn" evidence="19">
    <location>
        <begin position="414"/>
        <end position="417"/>
    </location>
</feature>
<feature type="strand" evidence="18">
    <location>
        <begin position="418"/>
        <end position="423"/>
    </location>
</feature>
<feature type="helix" evidence="18">
    <location>
        <begin position="426"/>
        <end position="428"/>
    </location>
</feature>
<feature type="helix" evidence="18">
    <location>
        <begin position="431"/>
        <end position="433"/>
    </location>
</feature>
<feature type="helix" evidence="18">
    <location>
        <begin position="436"/>
        <end position="446"/>
    </location>
</feature>
<feature type="strand" evidence="18">
    <location>
        <begin position="451"/>
        <end position="456"/>
    </location>
</feature>
<feature type="strand" evidence="22">
    <location>
        <begin position="458"/>
        <end position="460"/>
    </location>
</feature>
<feature type="helix" evidence="18">
    <location>
        <begin position="461"/>
        <end position="466"/>
    </location>
</feature>
<feature type="turn" evidence="18">
    <location>
        <begin position="467"/>
        <end position="469"/>
    </location>
</feature>
<feature type="strand" evidence="18">
    <location>
        <begin position="470"/>
        <end position="474"/>
    </location>
</feature>
<feature type="helix" evidence="18">
    <location>
        <begin position="480"/>
        <end position="494"/>
    </location>
</feature>
<feature type="helix" evidence="18">
    <location>
        <begin position="500"/>
        <end position="509"/>
    </location>
</feature>
<feature type="turn" evidence="18">
    <location>
        <begin position="510"/>
        <end position="512"/>
    </location>
</feature>
<feature type="helix" evidence="18">
    <location>
        <begin position="514"/>
        <end position="524"/>
    </location>
</feature>
<feature type="turn" evidence="18">
    <location>
        <begin position="525"/>
        <end position="527"/>
    </location>
</feature>
<feature type="strand" evidence="18">
    <location>
        <begin position="530"/>
        <end position="532"/>
    </location>
</feature>
<feature type="turn" evidence="18">
    <location>
        <begin position="533"/>
        <end position="535"/>
    </location>
</feature>
<feature type="helix" evidence="18">
    <location>
        <begin position="536"/>
        <end position="542"/>
    </location>
</feature>
<feature type="turn" evidence="15">
    <location>
        <begin position="545"/>
        <end position="548"/>
    </location>
</feature>
<feature type="helix" evidence="18">
    <location>
        <begin position="551"/>
        <end position="558"/>
    </location>
</feature>
<feature type="helix" evidence="18">
    <location>
        <begin position="562"/>
        <end position="564"/>
    </location>
</feature>
<feature type="helix" evidence="18">
    <location>
        <begin position="566"/>
        <end position="571"/>
    </location>
</feature>
<feature type="helix" evidence="18">
    <location>
        <begin position="574"/>
        <end position="583"/>
    </location>
</feature>
<feature type="turn" evidence="18">
    <location>
        <begin position="585"/>
        <end position="587"/>
    </location>
</feature>
<feature type="helix" evidence="18">
    <location>
        <begin position="588"/>
        <end position="595"/>
    </location>
</feature>
<feature type="strand" evidence="18">
    <location>
        <begin position="598"/>
        <end position="602"/>
    </location>
</feature>
<feature type="helix" evidence="18">
    <location>
        <begin position="610"/>
        <end position="631"/>
    </location>
</feature>
<feature type="strand" evidence="21">
    <location>
        <begin position="632"/>
        <end position="635"/>
    </location>
</feature>
<feature type="helix" evidence="18">
    <location>
        <begin position="638"/>
        <end position="640"/>
    </location>
</feature>
<feature type="helix" evidence="18">
    <location>
        <begin position="641"/>
        <end position="648"/>
    </location>
</feature>
<feature type="helix" evidence="18">
    <location>
        <begin position="650"/>
        <end position="656"/>
    </location>
</feature>
<feature type="strand" evidence="18">
    <location>
        <begin position="658"/>
        <end position="662"/>
    </location>
</feature>
<feature type="helix" evidence="18">
    <location>
        <begin position="669"/>
        <end position="690"/>
    </location>
</feature>
<feature type="turn" evidence="18">
    <location>
        <begin position="691"/>
        <end position="693"/>
    </location>
</feature>
<feature type="helix" evidence="18">
    <location>
        <begin position="698"/>
        <end position="703"/>
    </location>
</feature>
<feature type="helix" evidence="18">
    <location>
        <begin position="705"/>
        <end position="713"/>
    </location>
</feature>
<feature type="helix" evidence="18">
    <location>
        <begin position="715"/>
        <end position="720"/>
    </location>
</feature>
<feature type="helix" evidence="18">
    <location>
        <begin position="721"/>
        <end position="724"/>
    </location>
</feature>
<feature type="helix" evidence="18">
    <location>
        <begin position="725"/>
        <end position="734"/>
    </location>
</feature>
<feature type="helix" evidence="18">
    <location>
        <begin position="739"/>
        <end position="747"/>
    </location>
</feature>
<feature type="helix" evidence="18">
    <location>
        <begin position="751"/>
        <end position="753"/>
    </location>
</feature>
<feature type="helix" evidence="18">
    <location>
        <begin position="756"/>
        <end position="761"/>
    </location>
</feature>
<feature type="helix" evidence="18">
    <location>
        <begin position="764"/>
        <end position="775"/>
    </location>
</feature>
<feature type="strand" evidence="18">
    <location>
        <begin position="782"/>
        <end position="784"/>
    </location>
</feature>
<accession>P38630</accession>
<accession>D6W2S3</accession>
<organism>
    <name type="scientific">Saccharomyces cerevisiae (strain ATCC 204508 / S288c)</name>
    <name type="common">Baker's yeast</name>
    <dbReference type="NCBI Taxonomy" id="559292"/>
    <lineage>
        <taxon>Eukaryota</taxon>
        <taxon>Fungi</taxon>
        <taxon>Dikarya</taxon>
        <taxon>Ascomycota</taxon>
        <taxon>Saccharomycotina</taxon>
        <taxon>Saccharomycetes</taxon>
        <taxon>Saccharomycetales</taxon>
        <taxon>Saccharomycetaceae</taxon>
        <taxon>Saccharomyces</taxon>
    </lineage>
</organism>
<protein>
    <recommendedName>
        <fullName>Replication factor C subunit 1</fullName>
        <shortName>Replication factor C1</shortName>
    </recommendedName>
    <alternativeName>
        <fullName>Activator 1 95 kDa subunit</fullName>
    </alternativeName>
    <alternativeName>
        <fullName>Cell division control protein 44</fullName>
    </alternativeName>
</protein>
<proteinExistence type="evidence at protein level"/>
<keyword id="KW-0002">3D-structure</keyword>
<keyword id="KW-0067">ATP-binding</keyword>
<keyword id="KW-0131">Cell cycle</keyword>
<keyword id="KW-0132">Cell division</keyword>
<keyword id="KW-0235">DNA replication</keyword>
<keyword id="KW-0238">DNA-binding</keyword>
<keyword id="KW-0547">Nucleotide-binding</keyword>
<keyword id="KW-0539">Nucleus</keyword>
<keyword id="KW-0597">Phosphoprotein</keyword>
<keyword id="KW-1185">Reference proteome</keyword>
<comment type="function">
    <text>Component of the ATP-dependent clamp loader RFC complex for the POL30/PCNA homotrimer DNA clamp. During a clamp loading circle, the RFC:clamp complex binds to DNA and the recognition of the double-stranded/single-stranded junction stimulates ATP hydrolysis by RFC. The complex presumably provides bipartite ATP sites in which one subunit supplies a catalytic site for hydrolysis of ATP bound to the neighboring subunit. Dissociation of RFC from the clamp leaves the clamp encircling DNA. Replication factor C (RFC or activator 1) complex acts during elongation of primed DNA templates by DNA polymerase delta and epsilon. RFC has an essential but redundant activity in sister chromatid cohesion establishment.</text>
</comment>
<comment type="subunit">
    <text evidence="4 5 7 8 9">Replication factor C (RFC) is a heteropentamer of subunits RFC1, RFC2, RFC3, RFC4 and RFC5 and forms a complex with POL30/PCNA in the presence of ATP. Interacts with ECO1 and POL30/PCNA.</text>
</comment>
<comment type="subcellular location">
    <subcellularLocation>
        <location evidence="11">Nucleus</location>
    </subcellularLocation>
</comment>
<comment type="miscellaneous">
    <text evidence="6">Present with 2360 molecules/cell in log phase SD medium.</text>
</comment>
<comment type="similarity">
    <text evidence="11">Belongs to the activator 1 large subunit family.</text>
</comment>